<organism>
    <name type="scientific">Polynucleobacter necessarius subsp. necessarius (strain STIR1)</name>
    <dbReference type="NCBI Taxonomy" id="452638"/>
    <lineage>
        <taxon>Bacteria</taxon>
        <taxon>Pseudomonadati</taxon>
        <taxon>Pseudomonadota</taxon>
        <taxon>Betaproteobacteria</taxon>
        <taxon>Burkholderiales</taxon>
        <taxon>Burkholderiaceae</taxon>
        <taxon>Polynucleobacter</taxon>
    </lineage>
</organism>
<gene>
    <name evidence="1" type="primary">folD</name>
    <name type="ordered locus">Pnec_0703</name>
</gene>
<name>FOLD_POLNS</name>
<sequence>MPAQLLDGNALSKKLRTEIAARSAIVTAKGTRPGLAVIVVGDNPASQVYVRNKVKACEDVGFHSVLERYTAELGEEELLARIATLNADPAIHGILVQLPLPEHIASERVLEAIAPEKDVDGFHVANAGALMVGQSEFKPCTPYGCMKILESIEYPIRSARAVIVGASNIVGKPMAMLLLQAGATVTICNSKTRDLAHHTKDADILVVATGKPKMISGDMVKNGAVVIDVGINRLPDGKLCGDVDFDTAKYVAGWITPVPGGVGPMTITMLLMNTLEAAEKAAKH</sequence>
<keyword id="KW-0028">Amino-acid biosynthesis</keyword>
<keyword id="KW-0368">Histidine biosynthesis</keyword>
<keyword id="KW-0378">Hydrolase</keyword>
<keyword id="KW-0486">Methionine biosynthesis</keyword>
<keyword id="KW-0511">Multifunctional enzyme</keyword>
<keyword id="KW-0521">NADP</keyword>
<keyword id="KW-0554">One-carbon metabolism</keyword>
<keyword id="KW-0560">Oxidoreductase</keyword>
<keyword id="KW-0658">Purine biosynthesis</keyword>
<accession>B1XUA6</accession>
<comment type="function">
    <text evidence="1">Catalyzes the oxidation of 5,10-methylenetetrahydrofolate to 5,10-methenyltetrahydrofolate and then the hydrolysis of 5,10-methenyltetrahydrofolate to 10-formyltetrahydrofolate.</text>
</comment>
<comment type="catalytic activity">
    <reaction evidence="1">
        <text>(6R)-5,10-methylene-5,6,7,8-tetrahydrofolate + NADP(+) = (6R)-5,10-methenyltetrahydrofolate + NADPH</text>
        <dbReference type="Rhea" id="RHEA:22812"/>
        <dbReference type="ChEBI" id="CHEBI:15636"/>
        <dbReference type="ChEBI" id="CHEBI:57455"/>
        <dbReference type="ChEBI" id="CHEBI:57783"/>
        <dbReference type="ChEBI" id="CHEBI:58349"/>
        <dbReference type="EC" id="1.5.1.5"/>
    </reaction>
</comment>
<comment type="catalytic activity">
    <reaction evidence="1">
        <text>(6R)-5,10-methenyltetrahydrofolate + H2O = (6R)-10-formyltetrahydrofolate + H(+)</text>
        <dbReference type="Rhea" id="RHEA:23700"/>
        <dbReference type="ChEBI" id="CHEBI:15377"/>
        <dbReference type="ChEBI" id="CHEBI:15378"/>
        <dbReference type="ChEBI" id="CHEBI:57455"/>
        <dbReference type="ChEBI" id="CHEBI:195366"/>
        <dbReference type="EC" id="3.5.4.9"/>
    </reaction>
</comment>
<comment type="pathway">
    <text evidence="1">One-carbon metabolism; tetrahydrofolate interconversion.</text>
</comment>
<comment type="subunit">
    <text evidence="1">Homodimer.</text>
</comment>
<comment type="similarity">
    <text evidence="1">Belongs to the tetrahydrofolate dehydrogenase/cyclohydrolase family.</text>
</comment>
<proteinExistence type="inferred from homology"/>
<feature type="chain" id="PRO_1000147507" description="Bifunctional protein FolD">
    <location>
        <begin position="1"/>
        <end position="284"/>
    </location>
</feature>
<feature type="binding site" evidence="1">
    <location>
        <begin position="165"/>
        <end position="167"/>
    </location>
    <ligand>
        <name>NADP(+)</name>
        <dbReference type="ChEBI" id="CHEBI:58349"/>
    </ligand>
</feature>
<feature type="binding site" evidence="1">
    <location>
        <position position="190"/>
    </location>
    <ligand>
        <name>NADP(+)</name>
        <dbReference type="ChEBI" id="CHEBI:58349"/>
    </ligand>
</feature>
<feature type="binding site" evidence="1">
    <location>
        <position position="231"/>
    </location>
    <ligand>
        <name>NADP(+)</name>
        <dbReference type="ChEBI" id="CHEBI:58349"/>
    </ligand>
</feature>
<dbReference type="EC" id="1.5.1.5" evidence="1"/>
<dbReference type="EC" id="3.5.4.9" evidence="1"/>
<dbReference type="EMBL" id="CP001010">
    <property type="protein sequence ID" value="ACB43933.1"/>
    <property type="molecule type" value="Genomic_DNA"/>
</dbReference>
<dbReference type="SMR" id="B1XUA6"/>
<dbReference type="STRING" id="452638.Pnec_0703"/>
<dbReference type="KEGG" id="pne:Pnec_0703"/>
<dbReference type="eggNOG" id="COG0190">
    <property type="taxonomic scope" value="Bacteria"/>
</dbReference>
<dbReference type="HOGENOM" id="CLU_034045_2_1_4"/>
<dbReference type="OrthoDB" id="9803580at2"/>
<dbReference type="UniPathway" id="UPA00193"/>
<dbReference type="GO" id="GO:0005829">
    <property type="term" value="C:cytosol"/>
    <property type="evidence" value="ECO:0007669"/>
    <property type="project" value="TreeGrafter"/>
</dbReference>
<dbReference type="GO" id="GO:0004477">
    <property type="term" value="F:methenyltetrahydrofolate cyclohydrolase activity"/>
    <property type="evidence" value="ECO:0007669"/>
    <property type="project" value="UniProtKB-UniRule"/>
</dbReference>
<dbReference type="GO" id="GO:0004488">
    <property type="term" value="F:methylenetetrahydrofolate dehydrogenase (NADP+) activity"/>
    <property type="evidence" value="ECO:0007669"/>
    <property type="project" value="UniProtKB-UniRule"/>
</dbReference>
<dbReference type="GO" id="GO:0000105">
    <property type="term" value="P:L-histidine biosynthetic process"/>
    <property type="evidence" value="ECO:0007669"/>
    <property type="project" value="UniProtKB-KW"/>
</dbReference>
<dbReference type="GO" id="GO:0009086">
    <property type="term" value="P:methionine biosynthetic process"/>
    <property type="evidence" value="ECO:0007669"/>
    <property type="project" value="UniProtKB-KW"/>
</dbReference>
<dbReference type="GO" id="GO:0006164">
    <property type="term" value="P:purine nucleotide biosynthetic process"/>
    <property type="evidence" value="ECO:0007669"/>
    <property type="project" value="UniProtKB-KW"/>
</dbReference>
<dbReference type="GO" id="GO:0035999">
    <property type="term" value="P:tetrahydrofolate interconversion"/>
    <property type="evidence" value="ECO:0007669"/>
    <property type="project" value="UniProtKB-UniRule"/>
</dbReference>
<dbReference type="CDD" id="cd01080">
    <property type="entry name" value="NAD_bind_m-THF_DH_Cyclohyd"/>
    <property type="match status" value="1"/>
</dbReference>
<dbReference type="FunFam" id="3.40.50.720:FF:000094">
    <property type="entry name" value="Bifunctional protein FolD"/>
    <property type="match status" value="1"/>
</dbReference>
<dbReference type="FunFam" id="3.40.50.10860:FF:000005">
    <property type="entry name" value="C-1-tetrahydrofolate synthase, cytoplasmic, putative"/>
    <property type="match status" value="1"/>
</dbReference>
<dbReference type="Gene3D" id="3.40.50.10860">
    <property type="entry name" value="Leucine Dehydrogenase, chain A, domain 1"/>
    <property type="match status" value="1"/>
</dbReference>
<dbReference type="Gene3D" id="3.40.50.720">
    <property type="entry name" value="NAD(P)-binding Rossmann-like Domain"/>
    <property type="match status" value="1"/>
</dbReference>
<dbReference type="HAMAP" id="MF_01576">
    <property type="entry name" value="THF_DHG_CYH"/>
    <property type="match status" value="1"/>
</dbReference>
<dbReference type="InterPro" id="IPR046346">
    <property type="entry name" value="Aminoacid_DH-like_N_sf"/>
</dbReference>
<dbReference type="InterPro" id="IPR036291">
    <property type="entry name" value="NAD(P)-bd_dom_sf"/>
</dbReference>
<dbReference type="InterPro" id="IPR000672">
    <property type="entry name" value="THF_DH/CycHdrlase"/>
</dbReference>
<dbReference type="InterPro" id="IPR020630">
    <property type="entry name" value="THF_DH/CycHdrlase_cat_dom"/>
</dbReference>
<dbReference type="InterPro" id="IPR020867">
    <property type="entry name" value="THF_DH/CycHdrlase_CS"/>
</dbReference>
<dbReference type="InterPro" id="IPR020631">
    <property type="entry name" value="THF_DH/CycHdrlase_NAD-bd_dom"/>
</dbReference>
<dbReference type="NCBIfam" id="NF008058">
    <property type="entry name" value="PRK10792.1"/>
    <property type="match status" value="1"/>
</dbReference>
<dbReference type="NCBIfam" id="NF010783">
    <property type="entry name" value="PRK14186.1"/>
    <property type="match status" value="1"/>
</dbReference>
<dbReference type="NCBIfam" id="NF010786">
    <property type="entry name" value="PRK14189.1"/>
    <property type="match status" value="1"/>
</dbReference>
<dbReference type="PANTHER" id="PTHR48099:SF5">
    <property type="entry name" value="C-1-TETRAHYDROFOLATE SYNTHASE, CYTOPLASMIC"/>
    <property type="match status" value="1"/>
</dbReference>
<dbReference type="PANTHER" id="PTHR48099">
    <property type="entry name" value="C-1-TETRAHYDROFOLATE SYNTHASE, CYTOPLASMIC-RELATED"/>
    <property type="match status" value="1"/>
</dbReference>
<dbReference type="Pfam" id="PF00763">
    <property type="entry name" value="THF_DHG_CYH"/>
    <property type="match status" value="1"/>
</dbReference>
<dbReference type="Pfam" id="PF02882">
    <property type="entry name" value="THF_DHG_CYH_C"/>
    <property type="match status" value="1"/>
</dbReference>
<dbReference type="PRINTS" id="PR00085">
    <property type="entry name" value="THFDHDRGNASE"/>
</dbReference>
<dbReference type="SUPFAM" id="SSF53223">
    <property type="entry name" value="Aminoacid dehydrogenase-like, N-terminal domain"/>
    <property type="match status" value="1"/>
</dbReference>
<dbReference type="SUPFAM" id="SSF51735">
    <property type="entry name" value="NAD(P)-binding Rossmann-fold domains"/>
    <property type="match status" value="1"/>
</dbReference>
<dbReference type="PROSITE" id="PS00766">
    <property type="entry name" value="THF_DHG_CYH_1"/>
    <property type="match status" value="1"/>
</dbReference>
<dbReference type="PROSITE" id="PS00767">
    <property type="entry name" value="THF_DHG_CYH_2"/>
    <property type="match status" value="1"/>
</dbReference>
<evidence type="ECO:0000255" key="1">
    <source>
        <dbReference type="HAMAP-Rule" id="MF_01576"/>
    </source>
</evidence>
<protein>
    <recommendedName>
        <fullName evidence="1">Bifunctional protein FolD</fullName>
    </recommendedName>
    <domain>
        <recommendedName>
            <fullName evidence="1">Methylenetetrahydrofolate dehydrogenase</fullName>
            <ecNumber evidence="1">1.5.1.5</ecNumber>
        </recommendedName>
    </domain>
    <domain>
        <recommendedName>
            <fullName evidence="1">Methenyltetrahydrofolate cyclohydrolase</fullName>
            <ecNumber evidence="1">3.5.4.9</ecNumber>
        </recommendedName>
    </domain>
</protein>
<reference key="1">
    <citation type="journal article" date="2013" name="Proc. Natl. Acad. Sci. U.S.A.">
        <title>Polynucleobacter necessarius, a model for genome reduction in both free-living and symbiotic bacteria.</title>
        <authorList>
            <person name="Boscaro V."/>
            <person name="Felletti M."/>
            <person name="Vannini C."/>
            <person name="Ackerman M.S."/>
            <person name="Chain P.S."/>
            <person name="Malfatti S."/>
            <person name="Vergez L.M."/>
            <person name="Shin M."/>
            <person name="Doak T.G."/>
            <person name="Lynch M."/>
            <person name="Petroni G."/>
        </authorList>
    </citation>
    <scope>NUCLEOTIDE SEQUENCE [LARGE SCALE GENOMIC DNA]</scope>
    <source>
        <strain>STIR1</strain>
    </source>
</reference>